<feature type="chain" id="PRO_1000204644" description="Porphobilinogen deaminase">
    <location>
        <begin position="1"/>
        <end position="309"/>
    </location>
</feature>
<feature type="modified residue" description="S-(dipyrrolylmethanemethyl)cysteine" evidence="1">
    <location>
        <position position="240"/>
    </location>
</feature>
<sequence>MGKWKVGTRRSKLALTQTNWVVDKLKGFAPEADFELHEIVTKGDRILDVTLSKVGGKGLFVKEIEQSLFDKETDFAVHSLKDMPAELPDGLVIGAIPKRVDPRDVLLSKDGKTLDELPQGALVGTSSLRRSSQILAYRPDIQIESLRGNIDTRMRKLAEGNFDAIILAAAGLERVNFEGEISQFLPVEISLPAVGQGALAIECRADDEETLALLKQFDDAPTRLAVSAERSFLHKLQGGCQVPIGAYATVGENNEITLTGMVGSPDGKQMFKNTATGQDPLALGIQVAEALLAQGAGDVLAEVLRENEQ</sequence>
<keyword id="KW-0627">Porphyrin biosynthesis</keyword>
<keyword id="KW-1185">Reference proteome</keyword>
<keyword id="KW-0808">Transferase</keyword>
<reference key="1">
    <citation type="submission" date="2005-03" db="EMBL/GenBank/DDBJ databases">
        <title>Brevibacillus brevis strain 47, complete genome.</title>
        <authorList>
            <person name="Hosoyama A."/>
            <person name="Yamada R."/>
            <person name="Hongo Y."/>
            <person name="Terui Y."/>
            <person name="Ankai A."/>
            <person name="Masuyama W."/>
            <person name="Sekiguchi M."/>
            <person name="Takeda T."/>
            <person name="Asano K."/>
            <person name="Ohji S."/>
            <person name="Ichikawa N."/>
            <person name="Narita S."/>
            <person name="Aoki N."/>
            <person name="Miura H."/>
            <person name="Matsushita S."/>
            <person name="Sekigawa T."/>
            <person name="Yamagata H."/>
            <person name="Yoshikawa H."/>
            <person name="Udaka S."/>
            <person name="Tanikawa S."/>
            <person name="Fujita N."/>
        </authorList>
    </citation>
    <scope>NUCLEOTIDE SEQUENCE [LARGE SCALE GENOMIC DNA]</scope>
    <source>
        <strain>47 / JCM 6285 / NBRC 100599</strain>
    </source>
</reference>
<protein>
    <recommendedName>
        <fullName evidence="1">Porphobilinogen deaminase</fullName>
        <shortName evidence="1">PBG</shortName>
        <ecNumber evidence="1">2.5.1.61</ecNumber>
    </recommendedName>
    <alternativeName>
        <fullName evidence="1">Hydroxymethylbilane synthase</fullName>
        <shortName evidence="1">HMBS</shortName>
    </alternativeName>
    <alternativeName>
        <fullName evidence="1">Pre-uroporphyrinogen synthase</fullName>
    </alternativeName>
</protein>
<proteinExistence type="inferred from homology"/>
<organism>
    <name type="scientific">Brevibacillus brevis (strain 47 / JCM 6285 / NBRC 100599)</name>
    <dbReference type="NCBI Taxonomy" id="358681"/>
    <lineage>
        <taxon>Bacteria</taxon>
        <taxon>Bacillati</taxon>
        <taxon>Bacillota</taxon>
        <taxon>Bacilli</taxon>
        <taxon>Bacillales</taxon>
        <taxon>Paenibacillaceae</taxon>
        <taxon>Brevibacillus</taxon>
    </lineage>
</organism>
<name>HEM3_BREBN</name>
<accession>C0ZAH1</accession>
<comment type="function">
    <text evidence="1">Tetrapolymerization of the monopyrrole PBG into the hydroxymethylbilane pre-uroporphyrinogen in several discrete steps.</text>
</comment>
<comment type="catalytic activity">
    <reaction evidence="1">
        <text>4 porphobilinogen + H2O = hydroxymethylbilane + 4 NH4(+)</text>
        <dbReference type="Rhea" id="RHEA:13185"/>
        <dbReference type="ChEBI" id="CHEBI:15377"/>
        <dbReference type="ChEBI" id="CHEBI:28938"/>
        <dbReference type="ChEBI" id="CHEBI:57845"/>
        <dbReference type="ChEBI" id="CHEBI:58126"/>
        <dbReference type="EC" id="2.5.1.61"/>
    </reaction>
</comment>
<comment type="cofactor">
    <cofactor evidence="1">
        <name>dipyrromethane</name>
        <dbReference type="ChEBI" id="CHEBI:60342"/>
    </cofactor>
    <text evidence="1">Binds 1 dipyrromethane group covalently.</text>
</comment>
<comment type="pathway">
    <text evidence="1">Porphyrin-containing compound metabolism; protoporphyrin-IX biosynthesis; coproporphyrinogen-III from 5-aminolevulinate: step 2/4.</text>
</comment>
<comment type="subunit">
    <text evidence="1">Monomer.</text>
</comment>
<comment type="miscellaneous">
    <text evidence="1">The porphobilinogen subunits are added to the dipyrromethane group.</text>
</comment>
<comment type="similarity">
    <text evidence="1">Belongs to the HMBS family.</text>
</comment>
<gene>
    <name evidence="1" type="primary">hemC</name>
    <name type="ordered locus">BBR47_18030</name>
</gene>
<dbReference type="EC" id="2.5.1.61" evidence="1"/>
<dbReference type="EMBL" id="AP008955">
    <property type="protein sequence ID" value="BAH42780.1"/>
    <property type="molecule type" value="Genomic_DNA"/>
</dbReference>
<dbReference type="RefSeq" id="WP_012685523.1">
    <property type="nucleotide sequence ID" value="NC_012491.1"/>
</dbReference>
<dbReference type="SMR" id="C0ZAH1"/>
<dbReference type="STRING" id="358681.BBR47_18030"/>
<dbReference type="KEGG" id="bbe:BBR47_18030"/>
<dbReference type="eggNOG" id="COG0181">
    <property type="taxonomic scope" value="Bacteria"/>
</dbReference>
<dbReference type="HOGENOM" id="CLU_019704_0_2_9"/>
<dbReference type="UniPathway" id="UPA00251">
    <property type="reaction ID" value="UER00319"/>
</dbReference>
<dbReference type="Proteomes" id="UP000001877">
    <property type="component" value="Chromosome"/>
</dbReference>
<dbReference type="GO" id="GO:0005737">
    <property type="term" value="C:cytoplasm"/>
    <property type="evidence" value="ECO:0007669"/>
    <property type="project" value="TreeGrafter"/>
</dbReference>
<dbReference type="GO" id="GO:0004418">
    <property type="term" value="F:hydroxymethylbilane synthase activity"/>
    <property type="evidence" value="ECO:0007669"/>
    <property type="project" value="UniProtKB-UniRule"/>
</dbReference>
<dbReference type="GO" id="GO:0006782">
    <property type="term" value="P:protoporphyrinogen IX biosynthetic process"/>
    <property type="evidence" value="ECO:0007669"/>
    <property type="project" value="UniProtKB-UniRule"/>
</dbReference>
<dbReference type="CDD" id="cd13646">
    <property type="entry name" value="PBP2_EcHMBS_like"/>
    <property type="match status" value="1"/>
</dbReference>
<dbReference type="FunFam" id="3.30.160.40:FF:000001">
    <property type="entry name" value="Porphobilinogen deaminase"/>
    <property type="match status" value="1"/>
</dbReference>
<dbReference type="FunFam" id="3.40.190.10:FF:000004">
    <property type="entry name" value="Porphobilinogen deaminase"/>
    <property type="match status" value="1"/>
</dbReference>
<dbReference type="FunFam" id="3.40.190.10:FF:000005">
    <property type="entry name" value="Porphobilinogen deaminase"/>
    <property type="match status" value="1"/>
</dbReference>
<dbReference type="Gene3D" id="3.40.190.10">
    <property type="entry name" value="Periplasmic binding protein-like II"/>
    <property type="match status" value="2"/>
</dbReference>
<dbReference type="Gene3D" id="3.30.160.40">
    <property type="entry name" value="Porphobilinogen deaminase, C-terminal domain"/>
    <property type="match status" value="1"/>
</dbReference>
<dbReference type="HAMAP" id="MF_00260">
    <property type="entry name" value="Porphobil_deam"/>
    <property type="match status" value="1"/>
</dbReference>
<dbReference type="InterPro" id="IPR000860">
    <property type="entry name" value="HemC"/>
</dbReference>
<dbReference type="InterPro" id="IPR022419">
    <property type="entry name" value="Porphobilin_deaminase_cofac_BS"/>
</dbReference>
<dbReference type="InterPro" id="IPR022417">
    <property type="entry name" value="Porphobilin_deaminase_N"/>
</dbReference>
<dbReference type="InterPro" id="IPR022418">
    <property type="entry name" value="Porphobilinogen_deaminase_C"/>
</dbReference>
<dbReference type="InterPro" id="IPR036803">
    <property type="entry name" value="Porphobilinogen_deaminase_C_sf"/>
</dbReference>
<dbReference type="NCBIfam" id="TIGR00212">
    <property type="entry name" value="hemC"/>
    <property type="match status" value="1"/>
</dbReference>
<dbReference type="PANTHER" id="PTHR11557">
    <property type="entry name" value="PORPHOBILINOGEN DEAMINASE"/>
    <property type="match status" value="1"/>
</dbReference>
<dbReference type="PANTHER" id="PTHR11557:SF0">
    <property type="entry name" value="PORPHOBILINOGEN DEAMINASE"/>
    <property type="match status" value="1"/>
</dbReference>
<dbReference type="Pfam" id="PF01379">
    <property type="entry name" value="Porphobil_deam"/>
    <property type="match status" value="1"/>
</dbReference>
<dbReference type="Pfam" id="PF03900">
    <property type="entry name" value="Porphobil_deamC"/>
    <property type="match status" value="1"/>
</dbReference>
<dbReference type="PIRSF" id="PIRSF001438">
    <property type="entry name" value="4pyrrol_synth_OHMeBilane_synth"/>
    <property type="match status" value="1"/>
</dbReference>
<dbReference type="PRINTS" id="PR00151">
    <property type="entry name" value="PORPHBDMNASE"/>
</dbReference>
<dbReference type="SUPFAM" id="SSF53850">
    <property type="entry name" value="Periplasmic binding protein-like II"/>
    <property type="match status" value="1"/>
</dbReference>
<dbReference type="SUPFAM" id="SSF54782">
    <property type="entry name" value="Porphobilinogen deaminase (hydroxymethylbilane synthase), C-terminal domain"/>
    <property type="match status" value="1"/>
</dbReference>
<dbReference type="PROSITE" id="PS00533">
    <property type="entry name" value="PORPHOBILINOGEN_DEAM"/>
    <property type="match status" value="1"/>
</dbReference>
<evidence type="ECO:0000255" key="1">
    <source>
        <dbReference type="HAMAP-Rule" id="MF_00260"/>
    </source>
</evidence>